<sequence>MIENPIKRRPTRKIRVGSVYVGGDAPISVQSMTNTETCDVDATVAQIERCVDAGADIMRVSVPSMEAAEAFGAIRKRVSVPLVADIHFDHRIALAVADYGADCLRINPGNIGSDQKVREVVAAARHHGISMRIGVNAGSLEKDLQKKYGEPTGQALLESALRHIDILDRLDFHEFKVSVKASNVFLTMDAYRLLSQQIDNPLHLGVTEAGIYRTGTVKSAIALGGLLMEGIGDTMRISLAAEPEDEIKIGFDILKSLGLRSNGINFIACPSCSRQEFNVIQVMQALEERLEDIRTPMDVSVIGCKVNGPGEAKEADIGVVGAAPRSLVYRNGEKSHLIDTNQLVDEIETMVRQRVQELEEAKSKEIIRSSS</sequence>
<organism>
    <name type="scientific">Acinetobacter baumannii (strain ACICU)</name>
    <dbReference type="NCBI Taxonomy" id="405416"/>
    <lineage>
        <taxon>Bacteria</taxon>
        <taxon>Pseudomonadati</taxon>
        <taxon>Pseudomonadota</taxon>
        <taxon>Gammaproteobacteria</taxon>
        <taxon>Moraxellales</taxon>
        <taxon>Moraxellaceae</taxon>
        <taxon>Acinetobacter</taxon>
        <taxon>Acinetobacter calcoaceticus/baumannii complex</taxon>
    </lineage>
</organism>
<protein>
    <recommendedName>
        <fullName evidence="1">4-hydroxy-3-methylbut-2-en-1-yl diphosphate synthase (flavodoxin)</fullName>
        <ecNumber evidence="1">1.17.7.3</ecNumber>
    </recommendedName>
    <alternativeName>
        <fullName evidence="1">1-hydroxy-2-methyl-2-(E)-butenyl 4-diphosphate synthase</fullName>
    </alternativeName>
</protein>
<evidence type="ECO:0000255" key="1">
    <source>
        <dbReference type="HAMAP-Rule" id="MF_00159"/>
    </source>
</evidence>
<keyword id="KW-0004">4Fe-4S</keyword>
<keyword id="KW-0408">Iron</keyword>
<keyword id="KW-0411">Iron-sulfur</keyword>
<keyword id="KW-0414">Isoprene biosynthesis</keyword>
<keyword id="KW-0479">Metal-binding</keyword>
<keyword id="KW-0560">Oxidoreductase</keyword>
<reference key="1">
    <citation type="journal article" date="2008" name="Antimicrob. Agents Chemother.">
        <title>Whole-genome pyrosequencing of an epidemic multidrug-resistant Acinetobacter baumannii strain belonging to the European clone II group.</title>
        <authorList>
            <person name="Iacono M."/>
            <person name="Villa L."/>
            <person name="Fortini D."/>
            <person name="Bordoni R."/>
            <person name="Imperi F."/>
            <person name="Bonnal R.J."/>
            <person name="Sicheritz-Ponten T."/>
            <person name="De Bellis G."/>
            <person name="Visca P."/>
            <person name="Cassone A."/>
            <person name="Carattoli A."/>
        </authorList>
    </citation>
    <scope>NUCLEOTIDE SEQUENCE [LARGE SCALE GENOMIC DNA]</scope>
    <source>
        <strain>ACICU</strain>
    </source>
</reference>
<dbReference type="EC" id="1.17.7.3" evidence="1"/>
<dbReference type="EMBL" id="CP000863">
    <property type="protein sequence ID" value="ACC55823.1"/>
    <property type="molecule type" value="Genomic_DNA"/>
</dbReference>
<dbReference type="RefSeq" id="WP_000572095.1">
    <property type="nucleotide sequence ID" value="NZ_CP031380.1"/>
</dbReference>
<dbReference type="SMR" id="B2I3E5"/>
<dbReference type="GeneID" id="92892505"/>
<dbReference type="KEGG" id="abc:ACICU_00511"/>
<dbReference type="HOGENOM" id="CLU_042258_0_0_6"/>
<dbReference type="UniPathway" id="UPA00056">
    <property type="reaction ID" value="UER00096"/>
</dbReference>
<dbReference type="Proteomes" id="UP000008839">
    <property type="component" value="Chromosome"/>
</dbReference>
<dbReference type="GO" id="GO:0051539">
    <property type="term" value="F:4 iron, 4 sulfur cluster binding"/>
    <property type="evidence" value="ECO:0007669"/>
    <property type="project" value="UniProtKB-UniRule"/>
</dbReference>
<dbReference type="GO" id="GO:0046429">
    <property type="term" value="F:4-hydroxy-3-methylbut-2-en-1-yl diphosphate synthase activity (ferredoxin)"/>
    <property type="evidence" value="ECO:0007669"/>
    <property type="project" value="UniProtKB-UniRule"/>
</dbReference>
<dbReference type="GO" id="GO:0141197">
    <property type="term" value="F:4-hydroxy-3-methylbut-2-enyl-diphosphate synthase activity (flavodoxin)"/>
    <property type="evidence" value="ECO:0007669"/>
    <property type="project" value="UniProtKB-EC"/>
</dbReference>
<dbReference type="GO" id="GO:0005506">
    <property type="term" value="F:iron ion binding"/>
    <property type="evidence" value="ECO:0007669"/>
    <property type="project" value="InterPro"/>
</dbReference>
<dbReference type="GO" id="GO:0019288">
    <property type="term" value="P:isopentenyl diphosphate biosynthetic process, methylerythritol 4-phosphate pathway"/>
    <property type="evidence" value="ECO:0007669"/>
    <property type="project" value="UniProtKB-UniRule"/>
</dbReference>
<dbReference type="GO" id="GO:0016114">
    <property type="term" value="P:terpenoid biosynthetic process"/>
    <property type="evidence" value="ECO:0007669"/>
    <property type="project" value="InterPro"/>
</dbReference>
<dbReference type="FunFam" id="3.20.20.20:FF:000001">
    <property type="entry name" value="4-hydroxy-3-methylbut-2-en-1-yl diphosphate synthase (flavodoxin)"/>
    <property type="match status" value="1"/>
</dbReference>
<dbReference type="Gene3D" id="3.20.20.20">
    <property type="entry name" value="Dihydropteroate synthase-like"/>
    <property type="match status" value="1"/>
</dbReference>
<dbReference type="Gene3D" id="3.30.413.10">
    <property type="entry name" value="Sulfite Reductase Hemoprotein, domain 1"/>
    <property type="match status" value="1"/>
</dbReference>
<dbReference type="HAMAP" id="MF_00159">
    <property type="entry name" value="IspG"/>
    <property type="match status" value="1"/>
</dbReference>
<dbReference type="InterPro" id="IPR011005">
    <property type="entry name" value="Dihydropteroate_synth-like_sf"/>
</dbReference>
<dbReference type="InterPro" id="IPR016425">
    <property type="entry name" value="IspG_bac"/>
</dbReference>
<dbReference type="InterPro" id="IPR004588">
    <property type="entry name" value="IspG_bac-typ"/>
</dbReference>
<dbReference type="InterPro" id="IPR045854">
    <property type="entry name" value="NO2/SO3_Rdtase_4Fe4S_sf"/>
</dbReference>
<dbReference type="NCBIfam" id="TIGR00612">
    <property type="entry name" value="ispG_gcpE"/>
    <property type="match status" value="1"/>
</dbReference>
<dbReference type="NCBIfam" id="NF001540">
    <property type="entry name" value="PRK00366.1"/>
    <property type="match status" value="1"/>
</dbReference>
<dbReference type="PANTHER" id="PTHR30454">
    <property type="entry name" value="4-HYDROXY-3-METHYLBUT-2-EN-1-YL DIPHOSPHATE SYNTHASE"/>
    <property type="match status" value="1"/>
</dbReference>
<dbReference type="PANTHER" id="PTHR30454:SF0">
    <property type="entry name" value="4-HYDROXY-3-METHYLBUT-2-EN-1-YL DIPHOSPHATE SYNTHASE (FERREDOXIN), CHLOROPLASTIC"/>
    <property type="match status" value="1"/>
</dbReference>
<dbReference type="Pfam" id="PF04551">
    <property type="entry name" value="GcpE"/>
    <property type="match status" value="1"/>
</dbReference>
<dbReference type="PIRSF" id="PIRSF004640">
    <property type="entry name" value="IspG"/>
    <property type="match status" value="1"/>
</dbReference>
<dbReference type="SUPFAM" id="SSF51717">
    <property type="entry name" value="Dihydropteroate synthetase-like"/>
    <property type="match status" value="1"/>
</dbReference>
<dbReference type="SUPFAM" id="SSF56014">
    <property type="entry name" value="Nitrite and sulphite reductase 4Fe-4S domain-like"/>
    <property type="match status" value="1"/>
</dbReference>
<gene>
    <name evidence="1" type="primary">ispG</name>
    <name type="ordered locus">ACICU_00511</name>
</gene>
<proteinExistence type="inferred from homology"/>
<comment type="function">
    <text evidence="1">Converts 2C-methyl-D-erythritol 2,4-cyclodiphosphate (ME-2,4cPP) into 1-hydroxy-2-methyl-2-(E)-butenyl 4-diphosphate.</text>
</comment>
<comment type="catalytic activity">
    <reaction evidence="1">
        <text>(2E)-4-hydroxy-3-methylbut-2-enyl diphosphate + oxidized [flavodoxin] + H2O + 2 H(+) = 2-C-methyl-D-erythritol 2,4-cyclic diphosphate + reduced [flavodoxin]</text>
        <dbReference type="Rhea" id="RHEA:43604"/>
        <dbReference type="Rhea" id="RHEA-COMP:10622"/>
        <dbReference type="Rhea" id="RHEA-COMP:10623"/>
        <dbReference type="ChEBI" id="CHEBI:15377"/>
        <dbReference type="ChEBI" id="CHEBI:15378"/>
        <dbReference type="ChEBI" id="CHEBI:57618"/>
        <dbReference type="ChEBI" id="CHEBI:58210"/>
        <dbReference type="ChEBI" id="CHEBI:58483"/>
        <dbReference type="ChEBI" id="CHEBI:128753"/>
        <dbReference type="EC" id="1.17.7.3"/>
    </reaction>
</comment>
<comment type="cofactor">
    <cofactor evidence="1">
        <name>[4Fe-4S] cluster</name>
        <dbReference type="ChEBI" id="CHEBI:49883"/>
    </cofactor>
    <text evidence="1">Binds 1 [4Fe-4S] cluster.</text>
</comment>
<comment type="pathway">
    <text evidence="1">Isoprenoid biosynthesis; isopentenyl diphosphate biosynthesis via DXP pathway; isopentenyl diphosphate from 1-deoxy-D-xylulose 5-phosphate: step 5/6.</text>
</comment>
<comment type="similarity">
    <text evidence="1">Belongs to the IspG family.</text>
</comment>
<feature type="chain" id="PRO_1000097137" description="4-hydroxy-3-methylbut-2-en-1-yl diphosphate synthase (flavodoxin)">
    <location>
        <begin position="1"/>
        <end position="371"/>
    </location>
</feature>
<feature type="binding site" evidence="1">
    <location>
        <position position="269"/>
    </location>
    <ligand>
        <name>[4Fe-4S] cluster</name>
        <dbReference type="ChEBI" id="CHEBI:49883"/>
    </ligand>
</feature>
<feature type="binding site" evidence="1">
    <location>
        <position position="272"/>
    </location>
    <ligand>
        <name>[4Fe-4S] cluster</name>
        <dbReference type="ChEBI" id="CHEBI:49883"/>
    </ligand>
</feature>
<feature type="binding site" evidence="1">
    <location>
        <position position="304"/>
    </location>
    <ligand>
        <name>[4Fe-4S] cluster</name>
        <dbReference type="ChEBI" id="CHEBI:49883"/>
    </ligand>
</feature>
<feature type="binding site" evidence="1">
    <location>
        <position position="311"/>
    </location>
    <ligand>
        <name>[4Fe-4S] cluster</name>
        <dbReference type="ChEBI" id="CHEBI:49883"/>
    </ligand>
</feature>
<name>ISPG_ACIBC</name>
<accession>B2I3E5</accession>